<proteinExistence type="inferred from homology"/>
<dbReference type="EC" id="6.1.1.7" evidence="1"/>
<dbReference type="EMBL" id="CP000926">
    <property type="protein sequence ID" value="ABY99869.1"/>
    <property type="status" value="ALT_INIT"/>
    <property type="molecule type" value="Genomic_DNA"/>
</dbReference>
<dbReference type="RefSeq" id="WP_041166554.1">
    <property type="nucleotide sequence ID" value="NC_010322.1"/>
</dbReference>
<dbReference type="SMR" id="B0KR43"/>
<dbReference type="KEGG" id="ppg:PputGB1_3979"/>
<dbReference type="eggNOG" id="COG0013">
    <property type="taxonomic scope" value="Bacteria"/>
</dbReference>
<dbReference type="HOGENOM" id="CLU_004485_1_1_6"/>
<dbReference type="Proteomes" id="UP000002157">
    <property type="component" value="Chromosome"/>
</dbReference>
<dbReference type="GO" id="GO:0005829">
    <property type="term" value="C:cytosol"/>
    <property type="evidence" value="ECO:0007669"/>
    <property type="project" value="TreeGrafter"/>
</dbReference>
<dbReference type="GO" id="GO:0004813">
    <property type="term" value="F:alanine-tRNA ligase activity"/>
    <property type="evidence" value="ECO:0007669"/>
    <property type="project" value="UniProtKB-UniRule"/>
</dbReference>
<dbReference type="GO" id="GO:0002161">
    <property type="term" value="F:aminoacyl-tRNA deacylase activity"/>
    <property type="evidence" value="ECO:0007669"/>
    <property type="project" value="TreeGrafter"/>
</dbReference>
<dbReference type="GO" id="GO:0005524">
    <property type="term" value="F:ATP binding"/>
    <property type="evidence" value="ECO:0007669"/>
    <property type="project" value="UniProtKB-UniRule"/>
</dbReference>
<dbReference type="GO" id="GO:0000049">
    <property type="term" value="F:tRNA binding"/>
    <property type="evidence" value="ECO:0007669"/>
    <property type="project" value="UniProtKB-KW"/>
</dbReference>
<dbReference type="GO" id="GO:0008270">
    <property type="term" value="F:zinc ion binding"/>
    <property type="evidence" value="ECO:0007669"/>
    <property type="project" value="UniProtKB-UniRule"/>
</dbReference>
<dbReference type="GO" id="GO:0006419">
    <property type="term" value="P:alanyl-tRNA aminoacylation"/>
    <property type="evidence" value="ECO:0007669"/>
    <property type="project" value="UniProtKB-UniRule"/>
</dbReference>
<dbReference type="GO" id="GO:0045892">
    <property type="term" value="P:negative regulation of DNA-templated transcription"/>
    <property type="evidence" value="ECO:0007669"/>
    <property type="project" value="TreeGrafter"/>
</dbReference>
<dbReference type="CDD" id="cd00673">
    <property type="entry name" value="AlaRS_core"/>
    <property type="match status" value="1"/>
</dbReference>
<dbReference type="FunFam" id="2.40.30.130:FF:000001">
    <property type="entry name" value="Alanine--tRNA ligase"/>
    <property type="match status" value="1"/>
</dbReference>
<dbReference type="FunFam" id="3.10.310.40:FF:000001">
    <property type="entry name" value="Alanine--tRNA ligase"/>
    <property type="match status" value="1"/>
</dbReference>
<dbReference type="FunFam" id="3.30.54.20:FF:000001">
    <property type="entry name" value="Alanine--tRNA ligase"/>
    <property type="match status" value="1"/>
</dbReference>
<dbReference type="FunFam" id="3.30.930.10:FF:000004">
    <property type="entry name" value="Alanine--tRNA ligase"/>
    <property type="match status" value="1"/>
</dbReference>
<dbReference type="FunFam" id="3.30.980.10:FF:000004">
    <property type="entry name" value="Alanine--tRNA ligase, cytoplasmic"/>
    <property type="match status" value="1"/>
</dbReference>
<dbReference type="Gene3D" id="2.40.30.130">
    <property type="match status" value="1"/>
</dbReference>
<dbReference type="Gene3D" id="3.10.310.40">
    <property type="match status" value="1"/>
</dbReference>
<dbReference type="Gene3D" id="3.30.54.20">
    <property type="match status" value="1"/>
</dbReference>
<dbReference type="Gene3D" id="6.10.250.550">
    <property type="match status" value="1"/>
</dbReference>
<dbReference type="Gene3D" id="3.30.930.10">
    <property type="entry name" value="Bira Bifunctional Protein, Domain 2"/>
    <property type="match status" value="1"/>
</dbReference>
<dbReference type="Gene3D" id="3.30.980.10">
    <property type="entry name" value="Threonyl-trna Synthetase, Chain A, domain 2"/>
    <property type="match status" value="1"/>
</dbReference>
<dbReference type="HAMAP" id="MF_00036_B">
    <property type="entry name" value="Ala_tRNA_synth_B"/>
    <property type="match status" value="1"/>
</dbReference>
<dbReference type="InterPro" id="IPR045864">
    <property type="entry name" value="aa-tRNA-synth_II/BPL/LPL"/>
</dbReference>
<dbReference type="InterPro" id="IPR002318">
    <property type="entry name" value="Ala-tRNA-lgiase_IIc"/>
</dbReference>
<dbReference type="InterPro" id="IPR018162">
    <property type="entry name" value="Ala-tRNA-ligase_IIc_anticod-bd"/>
</dbReference>
<dbReference type="InterPro" id="IPR018165">
    <property type="entry name" value="Ala-tRNA-synth_IIc_core"/>
</dbReference>
<dbReference type="InterPro" id="IPR018164">
    <property type="entry name" value="Ala-tRNA-synth_IIc_N"/>
</dbReference>
<dbReference type="InterPro" id="IPR050058">
    <property type="entry name" value="Ala-tRNA_ligase"/>
</dbReference>
<dbReference type="InterPro" id="IPR023033">
    <property type="entry name" value="Ala_tRNA_ligase_euk/bac"/>
</dbReference>
<dbReference type="InterPro" id="IPR003156">
    <property type="entry name" value="DHHA1_dom"/>
</dbReference>
<dbReference type="InterPro" id="IPR018163">
    <property type="entry name" value="Thr/Ala-tRNA-synth_IIc_edit"/>
</dbReference>
<dbReference type="InterPro" id="IPR009000">
    <property type="entry name" value="Transl_B-barrel_sf"/>
</dbReference>
<dbReference type="InterPro" id="IPR012947">
    <property type="entry name" value="tRNA_SAD"/>
</dbReference>
<dbReference type="NCBIfam" id="TIGR00344">
    <property type="entry name" value="alaS"/>
    <property type="match status" value="1"/>
</dbReference>
<dbReference type="PANTHER" id="PTHR11777:SF9">
    <property type="entry name" value="ALANINE--TRNA LIGASE, CYTOPLASMIC"/>
    <property type="match status" value="1"/>
</dbReference>
<dbReference type="PANTHER" id="PTHR11777">
    <property type="entry name" value="ALANYL-TRNA SYNTHETASE"/>
    <property type="match status" value="1"/>
</dbReference>
<dbReference type="Pfam" id="PF02272">
    <property type="entry name" value="DHHA1"/>
    <property type="match status" value="1"/>
</dbReference>
<dbReference type="Pfam" id="PF01411">
    <property type="entry name" value="tRNA-synt_2c"/>
    <property type="match status" value="1"/>
</dbReference>
<dbReference type="Pfam" id="PF07973">
    <property type="entry name" value="tRNA_SAD"/>
    <property type="match status" value="1"/>
</dbReference>
<dbReference type="PRINTS" id="PR00980">
    <property type="entry name" value="TRNASYNTHALA"/>
</dbReference>
<dbReference type="SMART" id="SM00863">
    <property type="entry name" value="tRNA_SAD"/>
    <property type="match status" value="1"/>
</dbReference>
<dbReference type="SUPFAM" id="SSF55681">
    <property type="entry name" value="Class II aaRS and biotin synthetases"/>
    <property type="match status" value="1"/>
</dbReference>
<dbReference type="SUPFAM" id="SSF101353">
    <property type="entry name" value="Putative anticodon-binding domain of alanyl-tRNA synthetase (AlaRS)"/>
    <property type="match status" value="1"/>
</dbReference>
<dbReference type="SUPFAM" id="SSF55186">
    <property type="entry name" value="ThrRS/AlaRS common domain"/>
    <property type="match status" value="1"/>
</dbReference>
<dbReference type="SUPFAM" id="SSF50447">
    <property type="entry name" value="Translation proteins"/>
    <property type="match status" value="1"/>
</dbReference>
<dbReference type="PROSITE" id="PS50860">
    <property type="entry name" value="AA_TRNA_LIGASE_II_ALA"/>
    <property type="match status" value="1"/>
</dbReference>
<name>SYA_PSEPG</name>
<sequence length="874" mass="94653">MKSAEIREAFLRFFEEQGHTRVASSSLIPNNDPTLLFTNAGMNQFKDCFLGAEKRAYTRAVSSQKCVRAGGKHNDLENVGYTARHHTFFEMLGNFSFGDYFKRDAITFAWTFLTSEQWLNLPKEKLWVTVYATDDEAYDIWTKEVGVPAERMVRIGDNKGAPYASDNFWTMGDTGPCGPCTEIFYDHGPDIWGGPPGSPEEDGDRYIEIWNNVFMQFNRTADGVLHPLPAPSVDTGMGLERVSAVLQHVHSNYEIDLFQNLLAAAAKAIGCSNDGQASLKVVADHIRSCGFLIADGVLPSNEGRGYVLRRIIRRACRHGNKLGAKGSFFYQIVAALAAEMGEAFPELKSQQAHIERVLKAEEEQFAKTLEQGLRILEQDLAQLKGDVVPGDVVFKLYDTYGFPMDLTADIARERELTIDEAGFEREMDAQRERARSASAFGMDYNSLVKVDSATEFLGYDATEAQGKIIALYKDGQAVDQLGEGEQGVVVLDRTPFYAESGGQVGDTGFLQAGAARFDVRDTTKTGGAFLHHGVVASGALVIGSPVEAKVDADVQHATSLNHSATHLLHEALRQVLGEHVQQKGSLVDSQRLRFDFSHFEALKPEQIKQLEDIVNREVRKNTAVETELTDIETAKAKGAMALFGEKYGDTVRVLSMGGDFSVELCGGIHAKRTGDISLFKIISEGGVASGVRRIEAVTGAAALAYLNAAEEQVKEAAQLVKGNRDNLIDKLSAVLERNRQLEKQLEQLQAKAASAAGDDLSNAAVEVKGAKVLAARLDGQDGKALLALVDQLKNKLGHAVILLGSEHEGKVVLVAGVTKDLSSQLKAGDLMKQAAAAVGGKGGGRPDMAQGGGVDVAALDQALALAVPFAEQGL</sequence>
<protein>
    <recommendedName>
        <fullName evidence="1">Alanine--tRNA ligase</fullName>
        <ecNumber evidence="1">6.1.1.7</ecNumber>
    </recommendedName>
    <alternativeName>
        <fullName evidence="1">Alanyl-tRNA synthetase</fullName>
        <shortName evidence="1">AlaRS</shortName>
    </alternativeName>
</protein>
<accession>B0KR43</accession>
<gene>
    <name evidence="1" type="primary">alaS</name>
    <name type="ordered locus">PputGB1_3979</name>
</gene>
<feature type="chain" id="PRO_0000347741" description="Alanine--tRNA ligase">
    <location>
        <begin position="1"/>
        <end position="874"/>
    </location>
</feature>
<feature type="binding site" evidence="1">
    <location>
        <position position="562"/>
    </location>
    <ligand>
        <name>Zn(2+)</name>
        <dbReference type="ChEBI" id="CHEBI:29105"/>
    </ligand>
</feature>
<feature type="binding site" evidence="1">
    <location>
        <position position="566"/>
    </location>
    <ligand>
        <name>Zn(2+)</name>
        <dbReference type="ChEBI" id="CHEBI:29105"/>
    </ligand>
</feature>
<feature type="binding site" evidence="1">
    <location>
        <position position="665"/>
    </location>
    <ligand>
        <name>Zn(2+)</name>
        <dbReference type="ChEBI" id="CHEBI:29105"/>
    </ligand>
</feature>
<feature type="binding site" evidence="1">
    <location>
        <position position="669"/>
    </location>
    <ligand>
        <name>Zn(2+)</name>
        <dbReference type="ChEBI" id="CHEBI:29105"/>
    </ligand>
</feature>
<reference key="1">
    <citation type="submission" date="2008-01" db="EMBL/GenBank/DDBJ databases">
        <title>Complete sequence of Pseudomonas putida GB-1.</title>
        <authorList>
            <consortium name="US DOE Joint Genome Institute"/>
            <person name="Copeland A."/>
            <person name="Lucas S."/>
            <person name="Lapidus A."/>
            <person name="Barry K."/>
            <person name="Glavina del Rio T."/>
            <person name="Dalin E."/>
            <person name="Tice H."/>
            <person name="Pitluck S."/>
            <person name="Bruce D."/>
            <person name="Goodwin L."/>
            <person name="Chertkov O."/>
            <person name="Brettin T."/>
            <person name="Detter J.C."/>
            <person name="Han C."/>
            <person name="Kuske C.R."/>
            <person name="Schmutz J."/>
            <person name="Larimer F."/>
            <person name="Land M."/>
            <person name="Hauser L."/>
            <person name="Kyrpides N."/>
            <person name="Kim E."/>
            <person name="McCarthy J.K."/>
            <person name="Richardson P."/>
        </authorList>
    </citation>
    <scope>NUCLEOTIDE SEQUENCE [LARGE SCALE GENOMIC DNA]</scope>
    <source>
        <strain>GB-1</strain>
    </source>
</reference>
<comment type="function">
    <text evidence="1">Catalyzes the attachment of alanine to tRNA(Ala) in a two-step reaction: alanine is first activated by ATP to form Ala-AMP and then transferred to the acceptor end of tRNA(Ala). Also edits incorrectly charged Ser-tRNA(Ala) and Gly-tRNA(Ala) via its editing domain.</text>
</comment>
<comment type="catalytic activity">
    <reaction evidence="1">
        <text>tRNA(Ala) + L-alanine + ATP = L-alanyl-tRNA(Ala) + AMP + diphosphate</text>
        <dbReference type="Rhea" id="RHEA:12540"/>
        <dbReference type="Rhea" id="RHEA-COMP:9657"/>
        <dbReference type="Rhea" id="RHEA-COMP:9923"/>
        <dbReference type="ChEBI" id="CHEBI:30616"/>
        <dbReference type="ChEBI" id="CHEBI:33019"/>
        <dbReference type="ChEBI" id="CHEBI:57972"/>
        <dbReference type="ChEBI" id="CHEBI:78442"/>
        <dbReference type="ChEBI" id="CHEBI:78497"/>
        <dbReference type="ChEBI" id="CHEBI:456215"/>
        <dbReference type="EC" id="6.1.1.7"/>
    </reaction>
</comment>
<comment type="cofactor">
    <cofactor evidence="1">
        <name>Zn(2+)</name>
        <dbReference type="ChEBI" id="CHEBI:29105"/>
    </cofactor>
    <text evidence="1">Binds 1 zinc ion per subunit.</text>
</comment>
<comment type="subcellular location">
    <subcellularLocation>
        <location evidence="1">Cytoplasm</location>
    </subcellularLocation>
</comment>
<comment type="domain">
    <text evidence="1">Consists of three domains; the N-terminal catalytic domain, the editing domain and the C-terminal C-Ala domain. The editing domain removes incorrectly charged amino acids, while the C-Ala domain, along with tRNA(Ala), serves as a bridge to cooperatively bring together the editing and aminoacylation centers thus stimulating deacylation of misacylated tRNAs.</text>
</comment>
<comment type="similarity">
    <text evidence="1">Belongs to the class-II aminoacyl-tRNA synthetase family.</text>
</comment>
<comment type="sequence caution" evidence="2">
    <conflict type="erroneous initiation">
        <sequence resource="EMBL-CDS" id="ABY99869"/>
    </conflict>
</comment>
<keyword id="KW-0030">Aminoacyl-tRNA synthetase</keyword>
<keyword id="KW-0067">ATP-binding</keyword>
<keyword id="KW-0963">Cytoplasm</keyword>
<keyword id="KW-0436">Ligase</keyword>
<keyword id="KW-0479">Metal-binding</keyword>
<keyword id="KW-0547">Nucleotide-binding</keyword>
<keyword id="KW-0648">Protein biosynthesis</keyword>
<keyword id="KW-0694">RNA-binding</keyword>
<keyword id="KW-0820">tRNA-binding</keyword>
<keyword id="KW-0862">Zinc</keyword>
<organism>
    <name type="scientific">Pseudomonas putida (strain GB-1)</name>
    <dbReference type="NCBI Taxonomy" id="76869"/>
    <lineage>
        <taxon>Bacteria</taxon>
        <taxon>Pseudomonadati</taxon>
        <taxon>Pseudomonadota</taxon>
        <taxon>Gammaproteobacteria</taxon>
        <taxon>Pseudomonadales</taxon>
        <taxon>Pseudomonadaceae</taxon>
        <taxon>Pseudomonas</taxon>
    </lineage>
</organism>
<evidence type="ECO:0000255" key="1">
    <source>
        <dbReference type="HAMAP-Rule" id="MF_00036"/>
    </source>
</evidence>
<evidence type="ECO:0000305" key="2"/>